<feature type="chain" id="PRO_1000045846" description="Flagellar hook-basal body complex protein FliE">
    <location>
        <begin position="1"/>
        <end position="113"/>
    </location>
</feature>
<evidence type="ECO:0000255" key="1">
    <source>
        <dbReference type="HAMAP-Rule" id="MF_00724"/>
    </source>
</evidence>
<reference key="1">
    <citation type="journal article" date="2010" name="Genome Biol. Evol.">
        <title>Continuing evolution of Burkholderia mallei through genome reduction and large-scale rearrangements.</title>
        <authorList>
            <person name="Losada L."/>
            <person name="Ronning C.M."/>
            <person name="DeShazer D."/>
            <person name="Woods D."/>
            <person name="Fedorova N."/>
            <person name="Kim H.S."/>
            <person name="Shabalina S.A."/>
            <person name="Pearson T.R."/>
            <person name="Brinkac L."/>
            <person name="Tan P."/>
            <person name="Nandi T."/>
            <person name="Crabtree J."/>
            <person name="Badger J."/>
            <person name="Beckstrom-Sternberg S."/>
            <person name="Saqib M."/>
            <person name="Schutzer S.E."/>
            <person name="Keim P."/>
            <person name="Nierman W.C."/>
        </authorList>
    </citation>
    <scope>NUCLEOTIDE SEQUENCE [LARGE SCALE GENOMIC DNA]</scope>
    <source>
        <strain>NCTC 10247</strain>
    </source>
</reference>
<keyword id="KW-0975">Bacterial flagellum</keyword>
<comment type="subcellular location">
    <subcellularLocation>
        <location evidence="1">Bacterial flagellum basal body</location>
    </subcellularLocation>
</comment>
<comment type="similarity">
    <text evidence="1">Belongs to the FliE family.</text>
</comment>
<protein>
    <recommendedName>
        <fullName evidence="1">Flagellar hook-basal body complex protein FliE</fullName>
    </recommendedName>
</protein>
<gene>
    <name evidence="1" type="primary">fliE</name>
    <name type="ordered locus">BMA10247_3399</name>
</gene>
<name>FLIE_BURM7</name>
<sequence>MVAPVNGIASALQQMQAMAAQAAGGASPATSLAGSGAASAGSFASAMKASLDKISGDQQKALGEAHAFEIGAQNVSLNDVMVDMQKANIGFQFGLQVRNKLVSAYNEIMQMSV</sequence>
<accession>A3MRM9</accession>
<organism>
    <name type="scientific">Burkholderia mallei (strain NCTC 10247)</name>
    <dbReference type="NCBI Taxonomy" id="320389"/>
    <lineage>
        <taxon>Bacteria</taxon>
        <taxon>Pseudomonadati</taxon>
        <taxon>Pseudomonadota</taxon>
        <taxon>Betaproteobacteria</taxon>
        <taxon>Burkholderiales</taxon>
        <taxon>Burkholderiaceae</taxon>
        <taxon>Burkholderia</taxon>
        <taxon>pseudomallei group</taxon>
    </lineage>
</organism>
<proteinExistence type="inferred from homology"/>
<dbReference type="EMBL" id="CP000548">
    <property type="protein sequence ID" value="ABO04326.1"/>
    <property type="molecule type" value="Genomic_DNA"/>
</dbReference>
<dbReference type="RefSeq" id="WP_004185219.1">
    <property type="nucleotide sequence ID" value="NZ_CP007802.1"/>
</dbReference>
<dbReference type="SMR" id="A3MRM9"/>
<dbReference type="GeneID" id="92980950"/>
<dbReference type="KEGG" id="bmaz:BM44_3115"/>
<dbReference type="KEGG" id="bmn:BMA10247_3399"/>
<dbReference type="PATRIC" id="fig|320389.8.peg.3489"/>
<dbReference type="GO" id="GO:0009425">
    <property type="term" value="C:bacterial-type flagellum basal body"/>
    <property type="evidence" value="ECO:0007669"/>
    <property type="project" value="UniProtKB-SubCell"/>
</dbReference>
<dbReference type="GO" id="GO:0003774">
    <property type="term" value="F:cytoskeletal motor activity"/>
    <property type="evidence" value="ECO:0007669"/>
    <property type="project" value="InterPro"/>
</dbReference>
<dbReference type="GO" id="GO:0005198">
    <property type="term" value="F:structural molecule activity"/>
    <property type="evidence" value="ECO:0007669"/>
    <property type="project" value="InterPro"/>
</dbReference>
<dbReference type="GO" id="GO:0071973">
    <property type="term" value="P:bacterial-type flagellum-dependent cell motility"/>
    <property type="evidence" value="ECO:0007669"/>
    <property type="project" value="InterPro"/>
</dbReference>
<dbReference type="HAMAP" id="MF_00724">
    <property type="entry name" value="FliE"/>
    <property type="match status" value="1"/>
</dbReference>
<dbReference type="InterPro" id="IPR001624">
    <property type="entry name" value="FliE"/>
</dbReference>
<dbReference type="NCBIfam" id="TIGR00205">
    <property type="entry name" value="fliE"/>
    <property type="match status" value="1"/>
</dbReference>
<dbReference type="PANTHER" id="PTHR34653">
    <property type="match status" value="1"/>
</dbReference>
<dbReference type="PANTHER" id="PTHR34653:SF1">
    <property type="entry name" value="FLAGELLAR HOOK-BASAL BODY COMPLEX PROTEIN FLIE"/>
    <property type="match status" value="1"/>
</dbReference>
<dbReference type="Pfam" id="PF02049">
    <property type="entry name" value="FliE"/>
    <property type="match status" value="1"/>
</dbReference>
<dbReference type="PRINTS" id="PR01006">
    <property type="entry name" value="FLGHOOKFLIE"/>
</dbReference>